<sequence length="210" mass="21373">MAEAAESAPAPPPAEPAAKKKKQQPKKAAAARGAAKSKKPSSGPSVSEQIVTAVSASKERSGVSLAALKKTLAAGGYDVDKNNSRLKLALKVTKETLLQVKGSGASGSFKLNKKQLQSKDKAAAKKKAPLAAEAKKPAAAAKKTAKSPKKPKKVSAAAKSPKKLKKPAKAAKSPAKKTAVKPKVAAKSPAKAKAAKPKVAKAKKAAPKKK</sequence>
<reference key="1">
    <citation type="journal article" date="1985" name="J. Mol. Biol.">
        <title>Genomic organization and nucleotide sequence of two distinct histone gene clusters from Xenopus laevis. Identification of novel conserved upstream sequence elements.</title>
        <authorList>
            <person name="Perry M."/>
            <person name="Thomsen G.H."/>
            <person name="Roeder R.G."/>
        </authorList>
    </citation>
    <scope>NUCLEOTIDE SEQUENCE [GENOMIC DNA] (GENE CLUSTER X1H3)</scope>
</reference>
<reference key="2">
    <citation type="journal article" date="1985" name="J. Biol. Chem.">
        <title>Genomic organization and nucleotide sequence of two distinct histone gene clusters from Xenopus laevis: identification of novel conserved upstream sequence elements.</title>
        <authorList>
            <person name="Perry M."/>
            <person name="Thomsen G.H."/>
            <person name="Roeder R.G."/>
        </authorList>
    </citation>
    <scope>NUCLEOTIDE SEQUENCE [GENOMIC DNA]</scope>
</reference>
<name>H1A_XENLA</name>
<dbReference type="EMBL" id="X03018">
    <property type="protein sequence ID" value="CAA26815.1"/>
    <property type="molecule type" value="Genomic_DNA"/>
</dbReference>
<dbReference type="EMBL" id="M21287">
    <property type="protein sequence ID" value="AAA49767.1"/>
    <property type="molecule type" value="Genomic_DNA"/>
</dbReference>
<dbReference type="PIR" id="F24510">
    <property type="entry name" value="HSXL1A"/>
</dbReference>
<dbReference type="SMR" id="P06892"/>
<dbReference type="Proteomes" id="UP000186698">
    <property type="component" value="Unplaced"/>
</dbReference>
<dbReference type="GO" id="GO:0000786">
    <property type="term" value="C:nucleosome"/>
    <property type="evidence" value="ECO:0007669"/>
    <property type="project" value="InterPro"/>
</dbReference>
<dbReference type="GO" id="GO:0005634">
    <property type="term" value="C:nucleus"/>
    <property type="evidence" value="ECO:0007669"/>
    <property type="project" value="UniProtKB-SubCell"/>
</dbReference>
<dbReference type="GO" id="GO:0003677">
    <property type="term" value="F:DNA binding"/>
    <property type="evidence" value="ECO:0007669"/>
    <property type="project" value="UniProtKB-KW"/>
</dbReference>
<dbReference type="GO" id="GO:0030527">
    <property type="term" value="F:structural constituent of chromatin"/>
    <property type="evidence" value="ECO:0007669"/>
    <property type="project" value="InterPro"/>
</dbReference>
<dbReference type="GO" id="GO:0006334">
    <property type="term" value="P:nucleosome assembly"/>
    <property type="evidence" value="ECO:0007669"/>
    <property type="project" value="InterPro"/>
</dbReference>
<dbReference type="CDD" id="cd00073">
    <property type="entry name" value="H15"/>
    <property type="match status" value="1"/>
</dbReference>
<dbReference type="Gene3D" id="1.10.10.10">
    <property type="entry name" value="Winged helix-like DNA-binding domain superfamily/Winged helix DNA-binding domain"/>
    <property type="match status" value="1"/>
</dbReference>
<dbReference type="InterPro" id="IPR005819">
    <property type="entry name" value="H1/H5"/>
</dbReference>
<dbReference type="InterPro" id="IPR005818">
    <property type="entry name" value="Histone_H1/H5_H15"/>
</dbReference>
<dbReference type="InterPro" id="IPR036388">
    <property type="entry name" value="WH-like_DNA-bd_sf"/>
</dbReference>
<dbReference type="InterPro" id="IPR036390">
    <property type="entry name" value="WH_DNA-bd_sf"/>
</dbReference>
<dbReference type="Pfam" id="PF00538">
    <property type="entry name" value="Linker_histone"/>
    <property type="match status" value="1"/>
</dbReference>
<dbReference type="PRINTS" id="PR00624">
    <property type="entry name" value="HISTONEH5"/>
</dbReference>
<dbReference type="SMART" id="SM00526">
    <property type="entry name" value="H15"/>
    <property type="match status" value="1"/>
</dbReference>
<dbReference type="SUPFAM" id="SSF46785">
    <property type="entry name" value="Winged helix' DNA-binding domain"/>
    <property type="match status" value="1"/>
</dbReference>
<dbReference type="PROSITE" id="PS51504">
    <property type="entry name" value="H15"/>
    <property type="match status" value="1"/>
</dbReference>
<comment type="function">
    <text>Histones H1 are necessary for the condensation of nucleosome chains into higher-order structures.</text>
</comment>
<comment type="subcellular location">
    <subcellularLocation>
        <location>Nucleus</location>
    </subcellularLocation>
    <subcellularLocation>
        <location>Chromosome</location>
    </subcellularLocation>
</comment>
<comment type="similarity">
    <text evidence="1">Belongs to the histone H1/H5 family.</text>
</comment>
<proteinExistence type="inferred from homology"/>
<feature type="initiator methionine" description="Removed">
    <location>
        <position position="1"/>
    </location>
</feature>
<feature type="chain" id="PRO_0000195933" description="Histone H1A">
    <location>
        <begin position="2"/>
        <end position="210"/>
    </location>
</feature>
<feature type="domain" description="H15" evidence="1">
    <location>
        <begin position="42"/>
        <end position="113"/>
    </location>
</feature>
<feature type="region of interest" description="Disordered" evidence="2">
    <location>
        <begin position="1"/>
        <end position="49"/>
    </location>
</feature>
<feature type="region of interest" description="Disordered" evidence="2">
    <location>
        <begin position="101"/>
        <end position="210"/>
    </location>
</feature>
<feature type="compositionally biased region" description="Low complexity" evidence="2">
    <location>
        <begin position="26"/>
        <end position="45"/>
    </location>
</feature>
<feature type="compositionally biased region" description="Low complexity" evidence="2">
    <location>
        <begin position="129"/>
        <end position="142"/>
    </location>
</feature>
<feature type="compositionally biased region" description="Basic residues" evidence="2">
    <location>
        <begin position="143"/>
        <end position="153"/>
    </location>
</feature>
<feature type="compositionally biased region" description="Basic residues" evidence="2">
    <location>
        <begin position="160"/>
        <end position="180"/>
    </location>
</feature>
<feature type="compositionally biased region" description="Low complexity" evidence="2">
    <location>
        <begin position="181"/>
        <end position="192"/>
    </location>
</feature>
<feature type="compositionally biased region" description="Basic residues" evidence="2">
    <location>
        <begin position="193"/>
        <end position="210"/>
    </location>
</feature>
<keyword id="KW-0158">Chromosome</keyword>
<keyword id="KW-0238">DNA-binding</keyword>
<keyword id="KW-0539">Nucleus</keyword>
<keyword id="KW-1185">Reference proteome</keyword>
<evidence type="ECO:0000255" key="1">
    <source>
        <dbReference type="PROSITE-ProRule" id="PRU00837"/>
    </source>
</evidence>
<evidence type="ECO:0000256" key="2">
    <source>
        <dbReference type="SAM" id="MobiDB-lite"/>
    </source>
</evidence>
<protein>
    <recommendedName>
        <fullName>Histone H1A</fullName>
    </recommendedName>
</protein>
<organism>
    <name type="scientific">Xenopus laevis</name>
    <name type="common">African clawed frog</name>
    <dbReference type="NCBI Taxonomy" id="8355"/>
    <lineage>
        <taxon>Eukaryota</taxon>
        <taxon>Metazoa</taxon>
        <taxon>Chordata</taxon>
        <taxon>Craniata</taxon>
        <taxon>Vertebrata</taxon>
        <taxon>Euteleostomi</taxon>
        <taxon>Amphibia</taxon>
        <taxon>Batrachia</taxon>
        <taxon>Anura</taxon>
        <taxon>Pipoidea</taxon>
        <taxon>Pipidae</taxon>
        <taxon>Xenopodinae</taxon>
        <taxon>Xenopus</taxon>
        <taxon>Xenopus</taxon>
    </lineage>
</organism>
<accession>P06892</accession>